<evidence type="ECO:0000255" key="1">
    <source>
        <dbReference type="HAMAP-Rule" id="MF_00385"/>
    </source>
</evidence>
<evidence type="ECO:0000305" key="2"/>
<organism>
    <name type="scientific">Ureaplasma parvum serovar 3 (strain ATCC 700970)</name>
    <dbReference type="NCBI Taxonomy" id="273119"/>
    <lineage>
        <taxon>Bacteria</taxon>
        <taxon>Bacillati</taxon>
        <taxon>Mycoplasmatota</taxon>
        <taxon>Mycoplasmoidales</taxon>
        <taxon>Mycoplasmoidaceae</taxon>
        <taxon>Ureaplasma</taxon>
    </lineage>
</organism>
<feature type="chain" id="PRO_0000167277" description="Small ribosomal subunit protein bS16">
    <location>
        <begin position="1"/>
        <end position="101"/>
    </location>
</feature>
<protein>
    <recommendedName>
        <fullName evidence="1">Small ribosomal subunit protein bS16</fullName>
    </recommendedName>
    <alternativeName>
        <fullName evidence="2">30S ribosomal protein S16</fullName>
    </alternativeName>
</protein>
<proteinExistence type="inferred from homology"/>
<keyword id="KW-1185">Reference proteome</keyword>
<keyword id="KW-0687">Ribonucleoprotein</keyword>
<keyword id="KW-0689">Ribosomal protein</keyword>
<accession>Q9PPS1</accession>
<dbReference type="EMBL" id="AF222894">
    <property type="protein sequence ID" value="AAF30982.1"/>
    <property type="molecule type" value="Genomic_DNA"/>
</dbReference>
<dbReference type="RefSeq" id="WP_010891817.1">
    <property type="nucleotide sequence ID" value="NC_002162.1"/>
</dbReference>
<dbReference type="SMR" id="Q9PPS1"/>
<dbReference type="STRING" id="273119.UU568"/>
<dbReference type="EnsemblBacteria" id="AAF30982">
    <property type="protein sequence ID" value="AAF30982"/>
    <property type="gene ID" value="UU568"/>
</dbReference>
<dbReference type="GeneID" id="29672718"/>
<dbReference type="KEGG" id="uur:UU568"/>
<dbReference type="eggNOG" id="COG0228">
    <property type="taxonomic scope" value="Bacteria"/>
</dbReference>
<dbReference type="HOGENOM" id="CLU_100590_5_2_14"/>
<dbReference type="Proteomes" id="UP000000423">
    <property type="component" value="Chromosome"/>
</dbReference>
<dbReference type="GO" id="GO:0005737">
    <property type="term" value="C:cytoplasm"/>
    <property type="evidence" value="ECO:0007669"/>
    <property type="project" value="UniProtKB-ARBA"/>
</dbReference>
<dbReference type="GO" id="GO:0015935">
    <property type="term" value="C:small ribosomal subunit"/>
    <property type="evidence" value="ECO:0007669"/>
    <property type="project" value="TreeGrafter"/>
</dbReference>
<dbReference type="GO" id="GO:0003735">
    <property type="term" value="F:structural constituent of ribosome"/>
    <property type="evidence" value="ECO:0007669"/>
    <property type="project" value="InterPro"/>
</dbReference>
<dbReference type="GO" id="GO:0006412">
    <property type="term" value="P:translation"/>
    <property type="evidence" value="ECO:0007669"/>
    <property type="project" value="UniProtKB-UniRule"/>
</dbReference>
<dbReference type="Gene3D" id="3.30.1320.10">
    <property type="match status" value="1"/>
</dbReference>
<dbReference type="HAMAP" id="MF_00385">
    <property type="entry name" value="Ribosomal_bS16"/>
    <property type="match status" value="1"/>
</dbReference>
<dbReference type="InterPro" id="IPR000307">
    <property type="entry name" value="Ribosomal_bS16"/>
</dbReference>
<dbReference type="InterPro" id="IPR023803">
    <property type="entry name" value="Ribosomal_bS16_dom_sf"/>
</dbReference>
<dbReference type="NCBIfam" id="TIGR00002">
    <property type="entry name" value="S16"/>
    <property type="match status" value="1"/>
</dbReference>
<dbReference type="PANTHER" id="PTHR12919">
    <property type="entry name" value="30S RIBOSOMAL PROTEIN S16"/>
    <property type="match status" value="1"/>
</dbReference>
<dbReference type="PANTHER" id="PTHR12919:SF20">
    <property type="entry name" value="SMALL RIBOSOMAL SUBUNIT PROTEIN BS16M"/>
    <property type="match status" value="1"/>
</dbReference>
<dbReference type="Pfam" id="PF00886">
    <property type="entry name" value="Ribosomal_S16"/>
    <property type="match status" value="1"/>
</dbReference>
<dbReference type="SUPFAM" id="SSF54565">
    <property type="entry name" value="Ribosomal protein S16"/>
    <property type="match status" value="1"/>
</dbReference>
<gene>
    <name evidence="1" type="primary">rpsP</name>
    <name evidence="1" type="synonym">rps16</name>
    <name type="ordered locus">UU568</name>
</gene>
<comment type="similarity">
    <text evidence="1">Belongs to the bacterial ribosomal protein bS16 family.</text>
</comment>
<sequence length="101" mass="11297">MKILVKIRLTRVGTHKKPFFRIVVMDAKTKANGAYIENLGHYDPVLGQVVLKKEAILAQLQNGAQPSETVKNILSQEGIWKEFIALKDANKKRKAALSKAK</sequence>
<reference key="1">
    <citation type="journal article" date="2000" name="Nature">
        <title>The complete sequence of the mucosal pathogen Ureaplasma urealyticum.</title>
        <authorList>
            <person name="Glass J.I."/>
            <person name="Lefkowitz E.J."/>
            <person name="Glass J.S."/>
            <person name="Heiner C.R."/>
            <person name="Chen E.Y."/>
            <person name="Cassell G.H."/>
        </authorList>
    </citation>
    <scope>NUCLEOTIDE SEQUENCE [LARGE SCALE GENOMIC DNA]</scope>
    <source>
        <strain>ATCC 700970</strain>
    </source>
</reference>
<name>RS16_UREPA</name>